<comment type="function">
    <text evidence="1">RuBisCO catalyzes two reactions: the carboxylation of D-ribulose 1,5-bisphosphate, the primary event in carbon dioxide fixation, as well as the oxidative fragmentation of the pentose substrate. Both reactions occur simultaneously and in competition at the same active site. Although the small subunit is not catalytic it is essential for maximal activity.</text>
</comment>
<comment type="subunit">
    <text evidence="1">Heterohexadecamer of 8 large and 8 small subunits.</text>
</comment>
<comment type="subcellular location">
    <subcellularLocation>
        <location evidence="1">Plastid</location>
        <location evidence="1">Chloroplast</location>
    </subcellularLocation>
</comment>
<comment type="miscellaneous">
    <text evidence="1">The basic functional RuBisCO is composed of a large chain homodimer in a 'head-to-tail' conformation. In form I RuBisCO this homodimer is arranged in a barrel-like tetramer with the small subunits forming a tetrameric 'cap' on each end of the 'barrel'.</text>
</comment>
<comment type="similarity">
    <text evidence="1">Belongs to the RuBisCO small chain family.</text>
</comment>
<organism>
    <name type="scientific">Silene latifolia subsp. alba</name>
    <name type="common">White campion</name>
    <name type="synonym">Lychnis alba</name>
    <dbReference type="NCBI Taxonomy" id="52853"/>
    <lineage>
        <taxon>Eukaryota</taxon>
        <taxon>Viridiplantae</taxon>
        <taxon>Streptophyta</taxon>
        <taxon>Embryophyta</taxon>
        <taxon>Tracheophyta</taxon>
        <taxon>Spermatophyta</taxon>
        <taxon>Magnoliopsida</taxon>
        <taxon>eudicotyledons</taxon>
        <taxon>Gunneridae</taxon>
        <taxon>Pentapetalae</taxon>
        <taxon>Caryophyllales</taxon>
        <taxon>Caryophyllaceae</taxon>
        <taxon>Sileneae</taxon>
        <taxon>Silene</taxon>
        <taxon>Silene subgen. Behenantha</taxon>
        <taxon>Silene sect. Melandrium</taxon>
    </lineage>
</organism>
<dbReference type="EMBL" id="M16888">
    <property type="protein sequence ID" value="AAB39037.1"/>
    <property type="molecule type" value="mRNA"/>
</dbReference>
<dbReference type="PIR" id="B30836">
    <property type="entry name" value="RKQHS"/>
</dbReference>
<dbReference type="SMR" id="P18960"/>
<dbReference type="GO" id="GO:0009507">
    <property type="term" value="C:chloroplast"/>
    <property type="evidence" value="ECO:0007669"/>
    <property type="project" value="UniProtKB-SubCell"/>
</dbReference>
<dbReference type="GO" id="GO:0016984">
    <property type="term" value="F:ribulose-bisphosphate carboxylase activity"/>
    <property type="evidence" value="ECO:0007669"/>
    <property type="project" value="UniProtKB-UniRule"/>
</dbReference>
<dbReference type="GO" id="GO:0009853">
    <property type="term" value="P:photorespiration"/>
    <property type="evidence" value="ECO:0007669"/>
    <property type="project" value="UniProtKB-KW"/>
</dbReference>
<dbReference type="GO" id="GO:0019253">
    <property type="term" value="P:reductive pentose-phosphate cycle"/>
    <property type="evidence" value="ECO:0007669"/>
    <property type="project" value="UniProtKB-UniRule"/>
</dbReference>
<dbReference type="CDD" id="cd03527">
    <property type="entry name" value="RuBisCO_small"/>
    <property type="match status" value="1"/>
</dbReference>
<dbReference type="FunFam" id="3.30.190.10:FF:000001">
    <property type="entry name" value="Ribulose bisphosphate carboxylase small chain, chloroplastic"/>
    <property type="match status" value="1"/>
</dbReference>
<dbReference type="Gene3D" id="3.30.190.10">
    <property type="entry name" value="Ribulose bisphosphate carboxylase, small subunit"/>
    <property type="match status" value="1"/>
</dbReference>
<dbReference type="HAMAP" id="MF_00859">
    <property type="entry name" value="RuBisCO_S_bact"/>
    <property type="match status" value="1"/>
</dbReference>
<dbReference type="InterPro" id="IPR024681">
    <property type="entry name" value="RuBisCO_ssu"/>
</dbReference>
<dbReference type="InterPro" id="IPR000894">
    <property type="entry name" value="RuBisCO_ssu_dom"/>
</dbReference>
<dbReference type="InterPro" id="IPR024680">
    <property type="entry name" value="RuBisCO_ssu_N"/>
</dbReference>
<dbReference type="InterPro" id="IPR036385">
    <property type="entry name" value="RuBisCO_ssu_sf"/>
</dbReference>
<dbReference type="PANTHER" id="PTHR31262">
    <property type="entry name" value="RIBULOSE BISPHOSPHATE CARBOXYLASE SMALL CHAIN 1, CHLOROPLASTIC"/>
    <property type="match status" value="1"/>
</dbReference>
<dbReference type="PANTHER" id="PTHR31262:SF10">
    <property type="entry name" value="RIBULOSE BISPHOSPHATE CARBOXYLASE SMALL SUBUNIT 1A, CHLOROPLASTIC-RELATED"/>
    <property type="match status" value="1"/>
</dbReference>
<dbReference type="Pfam" id="PF12338">
    <property type="entry name" value="RbcS"/>
    <property type="match status" value="1"/>
</dbReference>
<dbReference type="Pfam" id="PF00101">
    <property type="entry name" value="RuBisCO_small"/>
    <property type="match status" value="1"/>
</dbReference>
<dbReference type="PRINTS" id="PR00152">
    <property type="entry name" value="RUBISCOSMALL"/>
</dbReference>
<dbReference type="SMART" id="SM00961">
    <property type="entry name" value="RuBisCO_small"/>
    <property type="match status" value="1"/>
</dbReference>
<dbReference type="SUPFAM" id="SSF55239">
    <property type="entry name" value="RuBisCO, small subunit"/>
    <property type="match status" value="1"/>
</dbReference>
<proteinExistence type="evidence at transcript level"/>
<gene>
    <name evidence="1" type="primary">RBCS</name>
</gene>
<protein>
    <recommendedName>
        <fullName evidence="1">Ribulose bisphosphate carboxylase small subunit, chloroplastic</fullName>
        <shortName evidence="1">RuBisCO small subunit</shortName>
    </recommendedName>
</protein>
<feature type="transit peptide" description="Chloroplast" evidence="1">
    <location>
        <begin position="1"/>
        <end position="55"/>
    </location>
</feature>
<feature type="chain" id="PRO_0000031549" description="Ribulose bisphosphate carboxylase small subunit, chloroplastic" evidence="1">
    <location>
        <begin position="56"/>
        <end position="177"/>
    </location>
</feature>
<name>RBS_SILLB</name>
<evidence type="ECO:0000255" key="1">
    <source>
        <dbReference type="HAMAP-Rule" id="MF_00860"/>
    </source>
</evidence>
<accession>P18960</accession>
<keyword id="KW-0113">Calvin cycle</keyword>
<keyword id="KW-0120">Carbon dioxide fixation</keyword>
<keyword id="KW-0150">Chloroplast</keyword>
<keyword id="KW-0601">Photorespiration</keyword>
<keyword id="KW-0602">Photosynthesis</keyword>
<keyword id="KW-0934">Plastid</keyword>
<keyword id="KW-0809">Transit peptide</keyword>
<reference key="1">
    <citation type="journal article" date="1986" name="Plant Mol. Biol.">
        <title>Silene cDNA clones for a divergent chlorophyll-a/b-binding protein and a small subunit of ribulose bisphosphate carboxylase.</title>
        <authorList>
            <person name="Smeekens S."/>
            <person name="van Oosten J."/>
            <person name="de Groot M."/>
            <person name="Weisbeek P.J."/>
        </authorList>
        <dbReference type="AGRICOLA" id="IND87019918"/>
    </citation>
    <scope>NUCLEOTIDE SEQUENCE [MRNA]</scope>
</reference>
<sequence>MASLMSNAAVVTASTAAQANMVAPFSGLKSTSAFPVSRKSNVDITSLATNGGRVNCMQVWPPRNLKKFETLSYLPTLSEESLLKEINYLLIKGWVPCLEFEVGPAHVYRENNKSPGYYDGRYWTMWKLPMFGCTDASQVAAEVVECKNAYPDAHVRIIGFDNKRQVQCISFIAYKPE</sequence>